<feature type="chain" id="PRO_0000366228" description="Ribosomal RNA large subunit methyltransferase I">
    <location>
        <begin position="1"/>
        <end position="396"/>
    </location>
</feature>
<feature type="domain" description="PUA" evidence="1">
    <location>
        <begin position="2"/>
        <end position="81"/>
    </location>
</feature>
<comment type="function">
    <text evidence="1">Specifically methylates the cytosine at position 1962 (m5C1962) of 23S rRNA.</text>
</comment>
<comment type="catalytic activity">
    <reaction evidence="1">
        <text>cytidine(1962) in 23S rRNA + S-adenosyl-L-methionine = 5-methylcytidine(1962) in 23S rRNA + S-adenosyl-L-homocysteine + H(+)</text>
        <dbReference type="Rhea" id="RHEA:42912"/>
        <dbReference type="Rhea" id="RHEA-COMP:10382"/>
        <dbReference type="Rhea" id="RHEA-COMP:10386"/>
        <dbReference type="ChEBI" id="CHEBI:15378"/>
        <dbReference type="ChEBI" id="CHEBI:57856"/>
        <dbReference type="ChEBI" id="CHEBI:59789"/>
        <dbReference type="ChEBI" id="CHEBI:74483"/>
        <dbReference type="ChEBI" id="CHEBI:82748"/>
        <dbReference type="EC" id="2.1.1.191"/>
    </reaction>
</comment>
<comment type="subcellular location">
    <subcellularLocation>
        <location evidence="1">Cytoplasm</location>
    </subcellularLocation>
</comment>
<comment type="similarity">
    <text evidence="1">Belongs to the methyltransferase superfamily. RlmI family.</text>
</comment>
<comment type="sequence caution" evidence="2">
    <conflict type="erroneous initiation">
        <sequence resource="EMBL-CDS" id="AAG55453"/>
    </conflict>
</comment>
<comment type="sequence caution" evidence="2">
    <conflict type="erroneous initiation">
        <sequence resource="EMBL-CDS" id="BAB34474"/>
    </conflict>
</comment>
<gene>
    <name evidence="1" type="primary">rlmI</name>
    <name type="ordered locus">Z1319</name>
    <name type="ordered locus">ECs1051</name>
</gene>
<organism>
    <name type="scientific">Escherichia coli O157:H7</name>
    <dbReference type="NCBI Taxonomy" id="83334"/>
    <lineage>
        <taxon>Bacteria</taxon>
        <taxon>Pseudomonadati</taxon>
        <taxon>Pseudomonadota</taxon>
        <taxon>Gammaproteobacteria</taxon>
        <taxon>Enterobacterales</taxon>
        <taxon>Enterobacteriaceae</taxon>
        <taxon>Escherichia</taxon>
    </lineage>
</organism>
<proteinExistence type="inferred from homology"/>
<reference key="1">
    <citation type="journal article" date="2001" name="Nature">
        <title>Genome sequence of enterohaemorrhagic Escherichia coli O157:H7.</title>
        <authorList>
            <person name="Perna N.T."/>
            <person name="Plunkett G. III"/>
            <person name="Burland V."/>
            <person name="Mau B."/>
            <person name="Glasner J.D."/>
            <person name="Rose D.J."/>
            <person name="Mayhew G.F."/>
            <person name="Evans P.S."/>
            <person name="Gregor J."/>
            <person name="Kirkpatrick H.A."/>
            <person name="Posfai G."/>
            <person name="Hackett J."/>
            <person name="Klink S."/>
            <person name="Boutin A."/>
            <person name="Shao Y."/>
            <person name="Miller L."/>
            <person name="Grotbeck E.J."/>
            <person name="Davis N.W."/>
            <person name="Lim A."/>
            <person name="Dimalanta E.T."/>
            <person name="Potamousis K."/>
            <person name="Apodaca J."/>
            <person name="Anantharaman T.S."/>
            <person name="Lin J."/>
            <person name="Yen G."/>
            <person name="Schwartz D.C."/>
            <person name="Welch R.A."/>
            <person name="Blattner F.R."/>
        </authorList>
    </citation>
    <scope>NUCLEOTIDE SEQUENCE [LARGE SCALE GENOMIC DNA]</scope>
    <source>
        <strain>O157:H7 / EDL933 / ATCC 700927 / EHEC</strain>
    </source>
</reference>
<reference key="2">
    <citation type="journal article" date="2001" name="DNA Res.">
        <title>Complete genome sequence of enterohemorrhagic Escherichia coli O157:H7 and genomic comparison with a laboratory strain K-12.</title>
        <authorList>
            <person name="Hayashi T."/>
            <person name="Makino K."/>
            <person name="Ohnishi M."/>
            <person name="Kurokawa K."/>
            <person name="Ishii K."/>
            <person name="Yokoyama K."/>
            <person name="Han C.-G."/>
            <person name="Ohtsubo E."/>
            <person name="Nakayama K."/>
            <person name="Murata T."/>
            <person name="Tanaka M."/>
            <person name="Tobe T."/>
            <person name="Iida T."/>
            <person name="Takami H."/>
            <person name="Honda T."/>
            <person name="Sasakawa C."/>
            <person name="Ogasawara N."/>
            <person name="Yasunaga T."/>
            <person name="Kuhara S."/>
            <person name="Shiba T."/>
            <person name="Hattori M."/>
            <person name="Shinagawa H."/>
        </authorList>
    </citation>
    <scope>NUCLEOTIDE SEQUENCE [LARGE SCALE GENOMIC DNA]</scope>
    <source>
        <strain>O157:H7 / Sakai / RIMD 0509952 / EHEC</strain>
    </source>
</reference>
<protein>
    <recommendedName>
        <fullName evidence="1">Ribosomal RNA large subunit methyltransferase I</fullName>
        <ecNumber evidence="1">2.1.1.191</ecNumber>
    </recommendedName>
    <alternativeName>
        <fullName evidence="1">23S rRNA m5C1962 methyltransferase</fullName>
    </alternativeName>
    <alternativeName>
        <fullName evidence="1">rRNA (cytosine-C(5)-)-methyltransferase RlmI</fullName>
    </alternativeName>
</protein>
<evidence type="ECO:0000255" key="1">
    <source>
        <dbReference type="HAMAP-Rule" id="MF_01857"/>
    </source>
</evidence>
<evidence type="ECO:0000305" key="2"/>
<accession>Q8XD85</accession>
<accession>Q7AG23</accession>
<keyword id="KW-0963">Cytoplasm</keyword>
<keyword id="KW-0489">Methyltransferase</keyword>
<keyword id="KW-1185">Reference proteome</keyword>
<keyword id="KW-0694">RNA-binding</keyword>
<keyword id="KW-0698">rRNA processing</keyword>
<keyword id="KW-0949">S-adenosyl-L-methionine</keyword>
<keyword id="KW-0808">Transferase</keyword>
<sequence length="396" mass="44357">MSVRLVLAKGREKSLLRRHPWVFSGAVARMEGKASLGETIDIVDHQGKWLARGAYSPASQIRARVWTFDPSESIDIAFFSRRLQQAQKWRDWLAQKDGLDSYRLIAGESDGLPGITIDRFGNFLVLQLLSAGAEYQRAALISALQTLYPECAIYDRSDVAVRKKEGMELTQGLVTGELPPALLPIEEHGMKLLVDIQHGHKTGYYLDQRDSRLATRRYVENKRVLNCFSYTGGFAVSALMGGCSQVVSVDTSQEALDIARQNVELNKLDLSKAEFVRDDVFKLLRTYRDRGEKFDVIVMDPPKFVENKSQLMGACRGYKDINMLAIQLLNEGGILLTFSCSGLMTSDLFQKIIADAAIDAGRDVQFIEQFRQAADHPVIATYPEGLYLKGFACRVM</sequence>
<name>RLMI_ECO57</name>
<dbReference type="EC" id="2.1.1.191" evidence="1"/>
<dbReference type="EMBL" id="AE005174">
    <property type="protein sequence ID" value="AAG55453.1"/>
    <property type="status" value="ALT_INIT"/>
    <property type="molecule type" value="Genomic_DNA"/>
</dbReference>
<dbReference type="EMBL" id="BA000007">
    <property type="protein sequence ID" value="BAB34474.1"/>
    <property type="status" value="ALT_INIT"/>
    <property type="molecule type" value="Genomic_DNA"/>
</dbReference>
<dbReference type="PIR" id="A85624">
    <property type="entry name" value="A85624"/>
</dbReference>
<dbReference type="PIR" id="C90760">
    <property type="entry name" value="C90760"/>
</dbReference>
<dbReference type="RefSeq" id="NP_309078.2">
    <property type="nucleotide sequence ID" value="NC_002695.1"/>
</dbReference>
<dbReference type="RefSeq" id="WP_000116288.1">
    <property type="nucleotide sequence ID" value="NZ_VOAI01000006.1"/>
</dbReference>
<dbReference type="SMR" id="Q8XD85"/>
<dbReference type="STRING" id="155864.Z1319"/>
<dbReference type="GeneID" id="916915"/>
<dbReference type="KEGG" id="ece:Z1319"/>
<dbReference type="KEGG" id="ecs:ECs_1051"/>
<dbReference type="PATRIC" id="fig|386585.9.peg.1176"/>
<dbReference type="eggNOG" id="COG1092">
    <property type="taxonomic scope" value="Bacteria"/>
</dbReference>
<dbReference type="HOGENOM" id="CLU_014042_0_0_6"/>
<dbReference type="OMA" id="VMDVFDY"/>
<dbReference type="Proteomes" id="UP000000558">
    <property type="component" value="Chromosome"/>
</dbReference>
<dbReference type="Proteomes" id="UP000002519">
    <property type="component" value="Chromosome"/>
</dbReference>
<dbReference type="GO" id="GO:0005737">
    <property type="term" value="C:cytoplasm"/>
    <property type="evidence" value="ECO:0007669"/>
    <property type="project" value="UniProtKB-SubCell"/>
</dbReference>
<dbReference type="GO" id="GO:0003723">
    <property type="term" value="F:RNA binding"/>
    <property type="evidence" value="ECO:0007669"/>
    <property type="project" value="UniProtKB-KW"/>
</dbReference>
<dbReference type="GO" id="GO:0016434">
    <property type="term" value="F:rRNA (cytosine) methyltransferase activity"/>
    <property type="evidence" value="ECO:0007669"/>
    <property type="project" value="UniProtKB-UniRule"/>
</dbReference>
<dbReference type="CDD" id="cd02440">
    <property type="entry name" value="AdoMet_MTases"/>
    <property type="match status" value="1"/>
</dbReference>
<dbReference type="CDD" id="cd21153">
    <property type="entry name" value="PUA_RlmI"/>
    <property type="match status" value="1"/>
</dbReference>
<dbReference type="CDD" id="cd11572">
    <property type="entry name" value="RlmI_M_like"/>
    <property type="match status" value="1"/>
</dbReference>
<dbReference type="FunFam" id="2.30.130.10:FF:000005">
    <property type="entry name" value="Ribosomal RNA large subunit methyltransferase I"/>
    <property type="match status" value="1"/>
</dbReference>
<dbReference type="FunFam" id="3.30.750.80:FF:000002">
    <property type="entry name" value="Ribosomal RNA large subunit methyltransferase I"/>
    <property type="match status" value="1"/>
</dbReference>
<dbReference type="FunFam" id="3.40.50.150:FF:000044">
    <property type="entry name" value="Ribosomal RNA large subunit methyltransferase I"/>
    <property type="match status" value="1"/>
</dbReference>
<dbReference type="Gene3D" id="2.30.130.10">
    <property type="entry name" value="PUA domain"/>
    <property type="match status" value="1"/>
</dbReference>
<dbReference type="Gene3D" id="3.30.750.80">
    <property type="entry name" value="RNA methyltransferase domain (HRMD) like"/>
    <property type="match status" value="1"/>
</dbReference>
<dbReference type="Gene3D" id="3.40.50.150">
    <property type="entry name" value="Vaccinia Virus protein VP39"/>
    <property type="match status" value="1"/>
</dbReference>
<dbReference type="HAMAP" id="MF_01857">
    <property type="entry name" value="23SrRNA_methyltr_I"/>
    <property type="match status" value="1"/>
</dbReference>
<dbReference type="InterPro" id="IPR002478">
    <property type="entry name" value="PUA"/>
</dbReference>
<dbReference type="InterPro" id="IPR015947">
    <property type="entry name" value="PUA-like_sf"/>
</dbReference>
<dbReference type="InterPro" id="IPR036974">
    <property type="entry name" value="PUA_sf"/>
</dbReference>
<dbReference type="InterPro" id="IPR023542">
    <property type="entry name" value="RLMI"/>
</dbReference>
<dbReference type="InterPro" id="IPR041532">
    <property type="entry name" value="RlmI-like_PUA"/>
</dbReference>
<dbReference type="InterPro" id="IPR019614">
    <property type="entry name" value="SAM-dep_methyl-trfase"/>
</dbReference>
<dbReference type="InterPro" id="IPR029063">
    <property type="entry name" value="SAM-dependent_MTases_sf"/>
</dbReference>
<dbReference type="NCBIfam" id="NF011707">
    <property type="entry name" value="PRK15128.1"/>
    <property type="match status" value="1"/>
</dbReference>
<dbReference type="PANTHER" id="PTHR42873">
    <property type="entry name" value="RIBOSOMAL RNA LARGE SUBUNIT METHYLTRANSFERASE"/>
    <property type="match status" value="1"/>
</dbReference>
<dbReference type="PANTHER" id="PTHR42873:SF1">
    <property type="entry name" value="S-ADENOSYLMETHIONINE-DEPENDENT METHYLTRANSFERASE DOMAIN-CONTAINING PROTEIN"/>
    <property type="match status" value="1"/>
</dbReference>
<dbReference type="Pfam" id="PF10672">
    <property type="entry name" value="Methyltrans_SAM"/>
    <property type="match status" value="1"/>
</dbReference>
<dbReference type="Pfam" id="PF17785">
    <property type="entry name" value="PUA_3"/>
    <property type="match status" value="1"/>
</dbReference>
<dbReference type="SMART" id="SM00359">
    <property type="entry name" value="PUA"/>
    <property type="match status" value="1"/>
</dbReference>
<dbReference type="SUPFAM" id="SSF88697">
    <property type="entry name" value="PUA domain-like"/>
    <property type="match status" value="1"/>
</dbReference>
<dbReference type="SUPFAM" id="SSF53335">
    <property type="entry name" value="S-adenosyl-L-methionine-dependent methyltransferases"/>
    <property type="match status" value="1"/>
</dbReference>
<dbReference type="PROSITE" id="PS50890">
    <property type="entry name" value="PUA"/>
    <property type="match status" value="1"/>
</dbReference>